<reference key="1">
    <citation type="journal article" date="2000" name="DNA Res.">
        <title>Structural analysis of Arabidopsis thaliana chromosome 3. I. Sequence features of the regions of 4,504,864 bp covered by sixty P1 and TAC clones.</title>
        <authorList>
            <person name="Sato S."/>
            <person name="Nakamura Y."/>
            <person name="Kaneko T."/>
            <person name="Katoh T."/>
            <person name="Asamizu E."/>
            <person name="Tabata S."/>
        </authorList>
    </citation>
    <scope>NUCLEOTIDE SEQUENCE [LARGE SCALE GENOMIC DNA]</scope>
    <source>
        <strain>cv. Columbia</strain>
    </source>
</reference>
<reference key="2">
    <citation type="journal article" date="2017" name="Plant J.">
        <title>Araport11: a complete reannotation of the Arabidopsis thaliana reference genome.</title>
        <authorList>
            <person name="Cheng C.Y."/>
            <person name="Krishnakumar V."/>
            <person name="Chan A.P."/>
            <person name="Thibaud-Nissen F."/>
            <person name="Schobel S."/>
            <person name="Town C.D."/>
        </authorList>
    </citation>
    <scope>GENOME REANNOTATION</scope>
    <source>
        <strain>cv. Columbia</strain>
    </source>
</reference>
<reference key="3">
    <citation type="journal article" date="2015" name="BMC Plant Biol.">
        <title>AtEAF1 is a potential platform protein for Arabidopsis NuA4 acetyltransferase complex.</title>
        <authorList>
            <person name="Bieluszewski T."/>
            <person name="Galganski L."/>
            <person name="Sura W."/>
            <person name="Bieluszewska A."/>
            <person name="Abram M."/>
            <person name="Ludwikow A."/>
            <person name="Ziolkowski P."/>
            <person name="Sadowski J."/>
        </authorList>
    </citation>
    <scope>FUNCTION</scope>
    <scope>IDENTIFICATION IN THE NUA4 COMPLEX</scope>
    <scope>TISSUE SPECIFICITY</scope>
    <scope>INTERACTION WITH TAF14 AND TAF14B</scope>
    <scope>SUBCELLULAR LOCATION</scope>
</reference>
<comment type="function">
    <text evidence="3">Component of the NuA4 histone acetyltransferase complex which is involved in transcriptional activation of selected genes principally by acetylation of nucleosomal histone H4 and H2A.</text>
</comment>
<comment type="subunit">
    <text evidence="3">Component of the NuA4 histone acetyltransferase complex. Interacts with ARP4 and SWC4, and (via HSA domain) with TAF14 and TAF14B.</text>
</comment>
<comment type="subcellular location">
    <subcellularLocation>
        <location evidence="3">Nucleus</location>
    </subcellularLocation>
</comment>
<comment type="alternative products">
    <event type="alternative splicing"/>
    <isoform>
        <id>F4J7T2-1</id>
        <name>1</name>
        <sequence type="displayed"/>
    </isoform>
    <text evidence="4">A number of isoforms are produced.</text>
</comment>
<comment type="tissue specificity">
    <text evidence="3">Expressed in leaves.</text>
</comment>
<comment type="similarity">
    <text evidence="4">Belongs to the EAF1 family.</text>
</comment>
<comment type="sequence caution" evidence="4">
    <conflict type="erroneous gene model prediction">
        <sequence resource="EMBL-CDS" id="BAB02897"/>
    </conflict>
</comment>
<protein>
    <recommendedName>
        <fullName>Chromatin modification-related protein EAF1 B</fullName>
    </recommendedName>
    <alternativeName>
        <fullName>ESA1-associated factor 1 B</fullName>
    </alternativeName>
</protein>
<sequence>MHGSVSGYLLVNAEVDSMGGVIDSGGGIGVKTSPRRTAIEKAQAELRQEYDVREERRRELEFLEKGGNPLDFKFGIATSHSVQSTSLTDQQAEHFVNSEVKDSFALTASPHGDSVESSGRPGVPTISEPNTADNLLLFDSENKSVEGERNLRHPNRQNRTSESERSSKAHTNQNTKETEDSAIFRPYARRNRSKISRDPARSSSTDLVQNRGGLATSISIRRGSVEGKGCIPEAANQKDMHTTSVSCPVFANSNGNIVPKNRVSSNSLNTKVDGEPVVRESTAGSKTSLLKDEADISYSKSSAYLPVGESGLAGEKAQLVSTGGSPKAATIAGQKNSSTQLNGLRDSTVEEESLTNRGATGTNGLESESSHANNVEVNVDNERDLYKVDKLDSDEISMQKTLRVEGLLDQTVGEMTKTKIEDETGQSTTIISECIPECEMQMKSVKIENQSHRSTAEMQTKEKSSETEKRLQDGLVVLENDSKVGSILSENPSSTLCSGIPQASVDTSSCTVGNSLLSGTDIEALKHQPSSDAVMLDTVKEDAILEEARIIQAKKKRIAELSCGTAPVEVREKSQWDFVLEEMAWLANDFAQERLWKMTAATQICHRVALTCQLRFEERNQHRKLKKIASVLSYAILQFWSSVEAEVPGELEETSLGIVKETCQESNCLNGIRCLAAGVKEYASRFLKYNNSSISYHSAALSTPDNMCDPEILDISMVDQLTEASLFYSVPSGAMEVYLKSIESHLTRCEKSGSSMQEEVDTSAYDTAGDIGYNVTAFDEDEGETSTYYLPGAFESSRSFNISHKKRKNLMKSHSARSYDLGDDLPYVNNTGGSNSSSLIVKRPDSNINAGSVPTRRVRTASRHRVVSPFGCATTGNLPVPSKTDASSGDTSSFQDEYSSLHGGSAVQKGTEVESSVNFEKLLPYDMAETSGKPKKKKKTHQGSAYDQTWHLNPSVHVEQKDHWKKRPENNFDMNGLYGPHSAKKQKTTKQLVENNFDMAIPHTGSIPSPAASQMSNMSNPNKSIKFIGGRDRGRKIKGLKISPGQHGSGNPWSLFEDQALVVLVHDMGPNWELISDAMNSTLKIKYIYRNPTECKDRHKILMDKTAGDGADSAEDSGNSQSYPSTLPGIPKGSARQLFQRLQGPMEEDTLKSHFEKICLIGKKLHYRKTQNDGRDPKQIVPVHNSQVMALSQVFPNNLNGGVLTPLDVCDASTSGQDVFSLENPGLPMLNQGTPVLPTSGAHPSTPGSSGVVLSNNLPTTSGLQSASVRDGRFNVPRGSLPLDEQHRLQQFNQTLSGRNLQQPSLSTPAAVSGSDRGHRMVPGGNAMGVSGMNRNTPMSRPGFQGMASAAMPNTGNMHTSGMVGIPNTGNIHSGGGASQGNSMIRPREAVQHMMRMQAAQGNSPGIPAFSNLSSGFTNQTTPVQAYPGHLSQQHQMSPQSHVLGNSHHPHLQSPSQATGAQQEAFAIRQRQIHQRYLQQQQQQFPASGSMMPHVQQPQGSSVSSSSQNSPQTQPPVSPQPLSMPPVSPSPNINAMAQQKPQKSQLALHGLGRSPQSGTSGVNNQAGKQRQRQLQQSARQHPHQRQPTQGQQLNKQLKGMGRGNMIHQNITVDQSHLNGLTMPQGNQATEKGEIAVSVRPDQQSSVGTTTSTDLQSKPFVSPLSSNHSQQLPKSFPGALSPSPQQQMQLHSDNSIQGQSSPATPCNILSTSSLSIAPAVAPSNHQHLLIHQKQRNQVQSTAQRVVQHNHLGNSELSKKSQAECMPRVPQSVTNTTQTASMGTTKGMPQASNDLKNIKAVGSTAVPALEPPSCVASVQSTASKVVNNSNTDSAGNDPVSTPNQGLAQKHGIKGVTQRQQQSLPSEEKRPKLPEKPTVQNQKHLASEEQPHLEEAQELSSSKPPDTKVE</sequence>
<gene>
    <name type="primary">EAF1B</name>
    <name evidence="5" type="ordered locus">At3g24870</name>
    <name evidence="6" type="ORF">K7P8.16</name>
</gene>
<organism evidence="7">
    <name type="scientific">Arabidopsis thaliana</name>
    <name type="common">Mouse-ear cress</name>
    <dbReference type="NCBI Taxonomy" id="3702"/>
    <lineage>
        <taxon>Eukaryota</taxon>
        <taxon>Viridiplantae</taxon>
        <taxon>Streptophyta</taxon>
        <taxon>Embryophyta</taxon>
        <taxon>Tracheophyta</taxon>
        <taxon>Spermatophyta</taxon>
        <taxon>Magnoliopsida</taxon>
        <taxon>eudicotyledons</taxon>
        <taxon>Gunneridae</taxon>
        <taxon>Pentapetalae</taxon>
        <taxon>rosids</taxon>
        <taxon>malvids</taxon>
        <taxon>Brassicales</taxon>
        <taxon>Brassicaceae</taxon>
        <taxon>Camelineae</taxon>
        <taxon>Arabidopsis</taxon>
    </lineage>
</organism>
<feature type="chain" id="PRO_0000432987" description="Chromatin modification-related protein EAF1 B">
    <location>
        <begin position="1"/>
        <end position="1907"/>
    </location>
</feature>
<feature type="domain" description="HSA" evidence="1">
    <location>
        <begin position="563"/>
        <end position="641"/>
    </location>
</feature>
<feature type="domain" description="SANT" evidence="4">
    <location>
        <begin position="1049"/>
        <end position="1105"/>
    </location>
</feature>
<feature type="region of interest" description="Disordered" evidence="2">
    <location>
        <begin position="108"/>
        <end position="208"/>
    </location>
</feature>
<feature type="region of interest" description="Disordered" evidence="2">
    <location>
        <begin position="261"/>
        <end position="287"/>
    </location>
</feature>
<feature type="region of interest" description="Disordered" evidence="2">
    <location>
        <begin position="323"/>
        <end position="373"/>
    </location>
</feature>
<feature type="region of interest" description="Disordered" evidence="2">
    <location>
        <begin position="449"/>
        <end position="469"/>
    </location>
</feature>
<feature type="region of interest" description="Disordered" evidence="2">
    <location>
        <begin position="836"/>
        <end position="909"/>
    </location>
</feature>
<feature type="region of interest" description="Disordered" evidence="2">
    <location>
        <begin position="928"/>
        <end position="952"/>
    </location>
</feature>
<feature type="region of interest" description="Disordered" evidence="2">
    <location>
        <begin position="1107"/>
        <end position="1131"/>
    </location>
</feature>
<feature type="region of interest" description="Disordered" evidence="2">
    <location>
        <begin position="1235"/>
        <end position="1266"/>
    </location>
</feature>
<feature type="region of interest" description="Disordered" evidence="2">
    <location>
        <begin position="1296"/>
        <end position="1319"/>
    </location>
</feature>
<feature type="region of interest" description="Disordered" evidence="2">
    <location>
        <begin position="1429"/>
        <end position="1465"/>
    </location>
</feature>
<feature type="region of interest" description="Disordered" evidence="2">
    <location>
        <begin position="1477"/>
        <end position="1594"/>
    </location>
</feature>
<feature type="region of interest" description="Disordered" evidence="2">
    <location>
        <begin position="1638"/>
        <end position="1703"/>
    </location>
</feature>
<feature type="region of interest" description="Disordered" evidence="2">
    <location>
        <begin position="1767"/>
        <end position="1791"/>
    </location>
</feature>
<feature type="region of interest" description="Disordered" evidence="2">
    <location>
        <begin position="1824"/>
        <end position="1907"/>
    </location>
</feature>
<feature type="compositionally biased region" description="Basic and acidic residues" evidence="2">
    <location>
        <begin position="140"/>
        <end position="151"/>
    </location>
</feature>
<feature type="compositionally biased region" description="Polar residues" evidence="2">
    <location>
        <begin position="261"/>
        <end position="270"/>
    </location>
</feature>
<feature type="compositionally biased region" description="Polar residues" evidence="2">
    <location>
        <begin position="333"/>
        <end position="342"/>
    </location>
</feature>
<feature type="compositionally biased region" description="Polar residues" evidence="2">
    <location>
        <begin position="355"/>
        <end position="372"/>
    </location>
</feature>
<feature type="compositionally biased region" description="Basic residues" evidence="2">
    <location>
        <begin position="856"/>
        <end position="866"/>
    </location>
</feature>
<feature type="compositionally biased region" description="Polar residues" evidence="2">
    <location>
        <begin position="884"/>
        <end position="898"/>
    </location>
</feature>
<feature type="compositionally biased region" description="Polar residues" evidence="2">
    <location>
        <begin position="942"/>
        <end position="952"/>
    </location>
</feature>
<feature type="compositionally biased region" description="Polar residues" evidence="2">
    <location>
        <begin position="1116"/>
        <end position="1125"/>
    </location>
</feature>
<feature type="compositionally biased region" description="Polar residues" evidence="2">
    <location>
        <begin position="1242"/>
        <end position="1266"/>
    </location>
</feature>
<feature type="compositionally biased region" description="Polar residues" evidence="2">
    <location>
        <begin position="1296"/>
        <end position="1310"/>
    </location>
</feature>
<feature type="compositionally biased region" description="Polar residues" evidence="2">
    <location>
        <begin position="1431"/>
        <end position="1444"/>
    </location>
</feature>
<feature type="compositionally biased region" description="Polar residues" evidence="2">
    <location>
        <begin position="1453"/>
        <end position="1462"/>
    </location>
</feature>
<feature type="compositionally biased region" description="Low complexity" evidence="2">
    <location>
        <begin position="1493"/>
        <end position="1512"/>
    </location>
</feature>
<feature type="compositionally biased region" description="Pro residues" evidence="2">
    <location>
        <begin position="1513"/>
        <end position="1529"/>
    </location>
</feature>
<feature type="compositionally biased region" description="Polar residues" evidence="2">
    <location>
        <begin position="1532"/>
        <end position="1545"/>
    </location>
</feature>
<feature type="compositionally biased region" description="Polar residues" evidence="2">
    <location>
        <begin position="1554"/>
        <end position="1568"/>
    </location>
</feature>
<feature type="compositionally biased region" description="Polar residues" evidence="2">
    <location>
        <begin position="1585"/>
        <end position="1594"/>
    </location>
</feature>
<feature type="compositionally biased region" description="Polar residues" evidence="2">
    <location>
        <begin position="1640"/>
        <end position="1655"/>
    </location>
</feature>
<feature type="compositionally biased region" description="Polar residues" evidence="2">
    <location>
        <begin position="1662"/>
        <end position="1672"/>
    </location>
</feature>
<feature type="compositionally biased region" description="Polar residues" evidence="2">
    <location>
        <begin position="1681"/>
        <end position="1703"/>
    </location>
</feature>
<feature type="compositionally biased region" description="Polar residues" evidence="2">
    <location>
        <begin position="1769"/>
        <end position="1782"/>
    </location>
</feature>
<feature type="compositionally biased region" description="Polar residues" evidence="2">
    <location>
        <begin position="1824"/>
        <end position="1844"/>
    </location>
</feature>
<feature type="compositionally biased region" description="Basic and acidic residues" evidence="2">
    <location>
        <begin position="1863"/>
        <end position="1872"/>
    </location>
</feature>
<feature type="compositionally biased region" description="Basic and acidic residues" evidence="2">
    <location>
        <begin position="1882"/>
        <end position="1892"/>
    </location>
</feature>
<proteinExistence type="evidence at protein level"/>
<keyword id="KW-0025">Alternative splicing</keyword>
<keyword id="KW-0156">Chromatin regulator</keyword>
<keyword id="KW-0238">DNA-binding</keyword>
<keyword id="KW-0539">Nucleus</keyword>
<keyword id="KW-1185">Reference proteome</keyword>
<dbReference type="EMBL" id="AB028609">
    <property type="protein sequence ID" value="BAB02897.1"/>
    <property type="status" value="ALT_SEQ"/>
    <property type="molecule type" value="Genomic_DNA"/>
</dbReference>
<dbReference type="EMBL" id="CP002686">
    <property type="protein sequence ID" value="AEE76955.1"/>
    <property type="molecule type" value="Genomic_DNA"/>
</dbReference>
<dbReference type="RefSeq" id="NP_189131.5">
    <molecule id="F4J7T2-1"/>
    <property type="nucleotide sequence ID" value="NM_113399.7"/>
</dbReference>
<dbReference type="SMR" id="F4J7T2"/>
<dbReference type="FunCoup" id="F4J7T2">
    <property type="interactions" value="1013"/>
</dbReference>
<dbReference type="STRING" id="3702.F4J7T2"/>
<dbReference type="GlyGen" id="F4J7T2">
    <property type="glycosylation" value="3 sites"/>
</dbReference>
<dbReference type="iPTMnet" id="F4J7T2"/>
<dbReference type="PaxDb" id="3702-AT3G24870.1"/>
<dbReference type="EnsemblPlants" id="AT3G24870.1">
    <molecule id="F4J7T2-1"/>
    <property type="protein sequence ID" value="AT3G24870.1"/>
    <property type="gene ID" value="AT3G24870"/>
</dbReference>
<dbReference type="GeneID" id="822085"/>
<dbReference type="Gramene" id="AT3G24870.1">
    <molecule id="F4J7T2-1"/>
    <property type="protein sequence ID" value="AT3G24870.1"/>
    <property type="gene ID" value="AT3G24870"/>
</dbReference>
<dbReference type="KEGG" id="ath:AT3G24870"/>
<dbReference type="Araport" id="AT3G24870"/>
<dbReference type="TAIR" id="AT3G24870">
    <property type="gene designation" value="ATEAF1B"/>
</dbReference>
<dbReference type="eggNOG" id="ENOG502S9E7">
    <property type="taxonomic scope" value="Eukaryota"/>
</dbReference>
<dbReference type="HOGENOM" id="CLU_002111_0_0_1"/>
<dbReference type="InParanoid" id="F4J7T2"/>
<dbReference type="OMA" id="MGHRKHL"/>
<dbReference type="PRO" id="PR:F4J7T2"/>
<dbReference type="Proteomes" id="UP000006548">
    <property type="component" value="Chromosome 3"/>
</dbReference>
<dbReference type="ExpressionAtlas" id="F4J7T2">
    <property type="expression patterns" value="baseline and differential"/>
</dbReference>
<dbReference type="GO" id="GO:0048046">
    <property type="term" value="C:apoplast"/>
    <property type="evidence" value="ECO:0007005"/>
    <property type="project" value="TAIR"/>
</dbReference>
<dbReference type="GO" id="GO:0035267">
    <property type="term" value="C:NuA4 histone acetyltransferase complex"/>
    <property type="evidence" value="ECO:0000314"/>
    <property type="project" value="UniProtKB"/>
</dbReference>
<dbReference type="GO" id="GO:0005634">
    <property type="term" value="C:nucleus"/>
    <property type="evidence" value="ECO:0000314"/>
    <property type="project" value="UniProtKB"/>
</dbReference>
<dbReference type="GO" id="GO:0003677">
    <property type="term" value="F:DNA binding"/>
    <property type="evidence" value="ECO:0007669"/>
    <property type="project" value="UniProtKB-KW"/>
</dbReference>
<dbReference type="GO" id="GO:0006325">
    <property type="term" value="P:chromatin organization"/>
    <property type="evidence" value="ECO:0007669"/>
    <property type="project" value="UniProtKB-KW"/>
</dbReference>
<dbReference type="GO" id="GO:0009909">
    <property type="term" value="P:regulation of flower development"/>
    <property type="evidence" value="ECO:0000315"/>
    <property type="project" value="UniProtKB"/>
</dbReference>
<dbReference type="GO" id="GO:2000028">
    <property type="term" value="P:regulation of photoperiodism, flowering"/>
    <property type="evidence" value="ECO:0000315"/>
    <property type="project" value="TAIR"/>
</dbReference>
<dbReference type="GO" id="GO:0048510">
    <property type="term" value="P:regulation of timing of transition from vegetative to reproductive phase"/>
    <property type="evidence" value="ECO:0000315"/>
    <property type="project" value="UniProtKB"/>
</dbReference>
<dbReference type="CDD" id="cd00167">
    <property type="entry name" value="SANT"/>
    <property type="match status" value="1"/>
</dbReference>
<dbReference type="FunFam" id="1.10.10.60:FF:000578">
    <property type="entry name" value="Helicase/SANT-associated, DNA binding protein"/>
    <property type="match status" value="1"/>
</dbReference>
<dbReference type="Gene3D" id="1.10.10.60">
    <property type="entry name" value="Homeodomain-like"/>
    <property type="match status" value="1"/>
</dbReference>
<dbReference type="InterPro" id="IPR044798">
    <property type="entry name" value="EAF1A/B"/>
</dbReference>
<dbReference type="InterPro" id="IPR009057">
    <property type="entry name" value="Homeodomain-like_sf"/>
</dbReference>
<dbReference type="InterPro" id="IPR014012">
    <property type="entry name" value="HSA_dom"/>
</dbReference>
<dbReference type="InterPro" id="IPR001005">
    <property type="entry name" value="SANT/Myb"/>
</dbReference>
<dbReference type="PANTHER" id="PTHR46774">
    <property type="entry name" value="CHROMATIN MODIFICATION-RELATED PROTEIN EAF1 A-RELATED"/>
    <property type="match status" value="1"/>
</dbReference>
<dbReference type="PANTHER" id="PTHR46774:SF3">
    <property type="entry name" value="CHROMATIN MODIFICATION-RELATED PROTEIN EAF1 A-RELATED"/>
    <property type="match status" value="1"/>
</dbReference>
<dbReference type="Pfam" id="PF07529">
    <property type="entry name" value="HSA"/>
    <property type="match status" value="1"/>
</dbReference>
<dbReference type="Pfam" id="PF13921">
    <property type="entry name" value="Myb_DNA-bind_6"/>
    <property type="match status" value="1"/>
</dbReference>
<dbReference type="SMART" id="SM00573">
    <property type="entry name" value="HSA"/>
    <property type="match status" value="1"/>
</dbReference>
<dbReference type="SMART" id="SM00717">
    <property type="entry name" value="SANT"/>
    <property type="match status" value="1"/>
</dbReference>
<dbReference type="SUPFAM" id="SSF46689">
    <property type="entry name" value="Homeodomain-like"/>
    <property type="match status" value="1"/>
</dbReference>
<dbReference type="PROSITE" id="PS51204">
    <property type="entry name" value="HSA"/>
    <property type="match status" value="1"/>
</dbReference>
<dbReference type="PROSITE" id="PS50090">
    <property type="entry name" value="MYB_LIKE"/>
    <property type="match status" value="1"/>
</dbReference>
<evidence type="ECO:0000255" key="1">
    <source>
        <dbReference type="PROSITE-ProRule" id="PRU00549"/>
    </source>
</evidence>
<evidence type="ECO:0000256" key="2">
    <source>
        <dbReference type="SAM" id="MobiDB-lite"/>
    </source>
</evidence>
<evidence type="ECO:0000269" key="3">
    <source ref="3"/>
</evidence>
<evidence type="ECO:0000305" key="4"/>
<evidence type="ECO:0000312" key="5">
    <source>
        <dbReference type="Araport" id="AT3G24870"/>
    </source>
</evidence>
<evidence type="ECO:0000312" key="6">
    <source>
        <dbReference type="EMBL" id="BAB02897.1"/>
    </source>
</evidence>
<evidence type="ECO:0000312" key="7">
    <source>
        <dbReference type="Proteomes" id="UP000006548"/>
    </source>
</evidence>
<name>EAF1B_ARATH</name>
<accession>F4J7T2</accession>
<accession>Q9LRX4</accession>